<name>LEUD_BIFA0</name>
<sequence length="226" mass="25854">MEKLTTITATGVPLRRSNVDTDQIIPAVFLKRVTRTGFDDALFYAWRRDPNFVLNQPEYRDGRILVAGPDFGIGSSREHAVWALHDYGFRVVIASRFADIFYGNTAKNGVLAAIMPQESIELIWKMLEEEPGRQMTVDLETRTVTIDDVVLPFEVNDYVRWRLMNGYDDIDLTLQHEDDIAAYERMRAEKFPFKPKTLPAITEEAETVESAREPEAVEWAGPLADR</sequence>
<evidence type="ECO:0000255" key="1">
    <source>
        <dbReference type="HAMAP-Rule" id="MF_01031"/>
    </source>
</evidence>
<evidence type="ECO:0000256" key="2">
    <source>
        <dbReference type="SAM" id="MobiDB-lite"/>
    </source>
</evidence>
<reference key="1">
    <citation type="journal article" date="2009" name="J. Bacteriol.">
        <title>Genome sequence of the probiotic bacterium Bifidobacterium animalis subsp. lactis AD011.</title>
        <authorList>
            <person name="Kim J.F."/>
            <person name="Jeong H."/>
            <person name="Yu D.S."/>
            <person name="Choi S.-H."/>
            <person name="Hur C.-G."/>
            <person name="Park M.-S."/>
            <person name="Yoon S.H."/>
            <person name="Kim D.-W."/>
            <person name="Ji G.E."/>
            <person name="Park H.-S."/>
            <person name="Oh T.K."/>
        </authorList>
    </citation>
    <scope>NUCLEOTIDE SEQUENCE [LARGE SCALE GENOMIC DNA]</scope>
    <source>
        <strain>AD011</strain>
    </source>
</reference>
<accession>B8DVN1</accession>
<protein>
    <recommendedName>
        <fullName evidence="1">3-isopropylmalate dehydratase small subunit</fullName>
        <ecNumber evidence="1">4.2.1.33</ecNumber>
    </recommendedName>
    <alternativeName>
        <fullName evidence="1">Alpha-IPM isomerase</fullName>
        <shortName evidence="1">IPMI</shortName>
    </alternativeName>
    <alternativeName>
        <fullName evidence="1">Isopropylmalate isomerase</fullName>
    </alternativeName>
</protein>
<keyword id="KW-0028">Amino-acid biosynthesis</keyword>
<keyword id="KW-0100">Branched-chain amino acid biosynthesis</keyword>
<keyword id="KW-0432">Leucine biosynthesis</keyword>
<keyword id="KW-0456">Lyase</keyword>
<keyword id="KW-1185">Reference proteome</keyword>
<feature type="chain" id="PRO_1000149403" description="3-isopropylmalate dehydratase small subunit">
    <location>
        <begin position="1"/>
        <end position="226"/>
    </location>
</feature>
<feature type="region of interest" description="Disordered" evidence="2">
    <location>
        <begin position="204"/>
        <end position="226"/>
    </location>
</feature>
<organism>
    <name type="scientific">Bifidobacterium animalis subsp. lactis (strain AD011)</name>
    <dbReference type="NCBI Taxonomy" id="442563"/>
    <lineage>
        <taxon>Bacteria</taxon>
        <taxon>Bacillati</taxon>
        <taxon>Actinomycetota</taxon>
        <taxon>Actinomycetes</taxon>
        <taxon>Bifidobacteriales</taxon>
        <taxon>Bifidobacteriaceae</taxon>
        <taxon>Bifidobacterium</taxon>
    </lineage>
</organism>
<comment type="function">
    <text evidence="1">Catalyzes the isomerization between 2-isopropylmalate and 3-isopropylmalate, via the formation of 2-isopropylmaleate.</text>
</comment>
<comment type="catalytic activity">
    <reaction evidence="1">
        <text>(2R,3S)-3-isopropylmalate = (2S)-2-isopropylmalate</text>
        <dbReference type="Rhea" id="RHEA:32287"/>
        <dbReference type="ChEBI" id="CHEBI:1178"/>
        <dbReference type="ChEBI" id="CHEBI:35121"/>
        <dbReference type="EC" id="4.2.1.33"/>
    </reaction>
</comment>
<comment type="pathway">
    <text evidence="1">Amino-acid biosynthesis; L-leucine biosynthesis; L-leucine from 3-methyl-2-oxobutanoate: step 2/4.</text>
</comment>
<comment type="subunit">
    <text evidence="1">Heterodimer of LeuC and LeuD.</text>
</comment>
<comment type="similarity">
    <text evidence="1">Belongs to the LeuD family. LeuD type 1 subfamily.</text>
</comment>
<proteinExistence type="inferred from homology"/>
<dbReference type="EC" id="4.2.1.33" evidence="1"/>
<dbReference type="EMBL" id="CP001213">
    <property type="protein sequence ID" value="ACL28532.1"/>
    <property type="molecule type" value="Genomic_DNA"/>
</dbReference>
<dbReference type="RefSeq" id="WP_004218172.1">
    <property type="nucleotide sequence ID" value="NC_011835.1"/>
</dbReference>
<dbReference type="SMR" id="B8DVN1"/>
<dbReference type="STRING" id="442563.BLA_0230"/>
<dbReference type="GeneID" id="29696085"/>
<dbReference type="KEGG" id="bla:BLA_0230"/>
<dbReference type="HOGENOM" id="CLU_081378_0_1_11"/>
<dbReference type="UniPathway" id="UPA00048">
    <property type="reaction ID" value="UER00071"/>
</dbReference>
<dbReference type="Proteomes" id="UP000002456">
    <property type="component" value="Chromosome"/>
</dbReference>
<dbReference type="GO" id="GO:0009316">
    <property type="term" value="C:3-isopropylmalate dehydratase complex"/>
    <property type="evidence" value="ECO:0007669"/>
    <property type="project" value="InterPro"/>
</dbReference>
<dbReference type="GO" id="GO:0003861">
    <property type="term" value="F:3-isopropylmalate dehydratase activity"/>
    <property type="evidence" value="ECO:0007669"/>
    <property type="project" value="UniProtKB-UniRule"/>
</dbReference>
<dbReference type="GO" id="GO:0009098">
    <property type="term" value="P:L-leucine biosynthetic process"/>
    <property type="evidence" value="ECO:0007669"/>
    <property type="project" value="UniProtKB-UniRule"/>
</dbReference>
<dbReference type="CDD" id="cd01577">
    <property type="entry name" value="IPMI_Swivel"/>
    <property type="match status" value="1"/>
</dbReference>
<dbReference type="FunFam" id="3.20.19.10:FF:000003">
    <property type="entry name" value="3-isopropylmalate dehydratase small subunit"/>
    <property type="match status" value="1"/>
</dbReference>
<dbReference type="Gene3D" id="3.20.19.10">
    <property type="entry name" value="Aconitase, domain 4"/>
    <property type="match status" value="1"/>
</dbReference>
<dbReference type="HAMAP" id="MF_01031">
    <property type="entry name" value="LeuD_type1"/>
    <property type="match status" value="1"/>
</dbReference>
<dbReference type="InterPro" id="IPR004431">
    <property type="entry name" value="3-IsopropMal_deHydase_ssu"/>
</dbReference>
<dbReference type="InterPro" id="IPR015928">
    <property type="entry name" value="Aconitase/3IPM_dehydase_swvl"/>
</dbReference>
<dbReference type="InterPro" id="IPR000573">
    <property type="entry name" value="AconitaseA/IPMdHydase_ssu_swvl"/>
</dbReference>
<dbReference type="InterPro" id="IPR033940">
    <property type="entry name" value="IPMI_Swivel"/>
</dbReference>
<dbReference type="InterPro" id="IPR050075">
    <property type="entry name" value="LeuD"/>
</dbReference>
<dbReference type="NCBIfam" id="TIGR00171">
    <property type="entry name" value="leuD"/>
    <property type="match status" value="1"/>
</dbReference>
<dbReference type="NCBIfam" id="NF002458">
    <property type="entry name" value="PRK01641.1"/>
    <property type="match status" value="1"/>
</dbReference>
<dbReference type="PANTHER" id="PTHR43345:SF5">
    <property type="entry name" value="3-ISOPROPYLMALATE DEHYDRATASE SMALL SUBUNIT"/>
    <property type="match status" value="1"/>
</dbReference>
<dbReference type="PANTHER" id="PTHR43345">
    <property type="entry name" value="3-ISOPROPYLMALATE DEHYDRATASE SMALL SUBUNIT 2-RELATED-RELATED"/>
    <property type="match status" value="1"/>
</dbReference>
<dbReference type="Pfam" id="PF00694">
    <property type="entry name" value="Aconitase_C"/>
    <property type="match status" value="1"/>
</dbReference>
<dbReference type="SUPFAM" id="SSF52016">
    <property type="entry name" value="LeuD/IlvD-like"/>
    <property type="match status" value="1"/>
</dbReference>
<gene>
    <name evidence="1" type="primary">leuD</name>
    <name type="ordered locus">BLA_0230</name>
</gene>